<comment type="function">
    <text evidence="1 2">Plays a role in the regulation of phosphate uptake. In this role, it may bind, possibly as a chaperone, to PhoR, PhoP or a PhoR-PhoP complex to promote dephosphorylation of phospho-PhoP, or inhibit formation of the PhoR-PhoP transitory complex (By similarity). Important for tolerance to antibiotics.</text>
</comment>
<comment type="subunit">
    <text evidence="1">Homodimer.</text>
</comment>
<comment type="subcellular location">
    <subcellularLocation>
        <location evidence="1">Cytoplasm</location>
    </subcellularLocation>
</comment>
<comment type="disruption phenotype">
    <text evidence="2">Defective in persistence phenotype shown by increased susceptibility to tuberculosis (TB) drugs rifampicin and pyrazinamide in both minimum inhibitory concentration (MIC) testing and drug exposure assays. The MICs of rifampicin and pyrazinamide decreased 4-fold and 2-fold, respectively. Reduced persistence in the mouse model of TB infection. Mutant was less able to survive and persist in the mouse lungs and spleens as shown by an about 10- to 30-fold decrease in colony forming unit (cfu) counts compared with the virulent strain.</text>
</comment>
<comment type="pharmaceutical">
    <text>May be a drug target for designing new drugs that kill persister bacteria for more effective control of bacterial infections.</text>
</comment>
<comment type="similarity">
    <text evidence="3">Belongs to the PhoU family.</text>
</comment>
<accession>P9WI95</accession>
<accession>L0T6J6</accession>
<accession>O53833</accession>
<accession>P65720</accession>
<feature type="chain" id="PRO_0000155173" description="Phosphate-specific transport system accessory protein PhoU homolog 2">
    <location>
        <begin position="1"/>
        <end position="213"/>
    </location>
</feature>
<organism>
    <name type="scientific">Mycobacterium tuberculosis (strain ATCC 25618 / H37Rv)</name>
    <dbReference type="NCBI Taxonomy" id="83332"/>
    <lineage>
        <taxon>Bacteria</taxon>
        <taxon>Bacillati</taxon>
        <taxon>Actinomycetota</taxon>
        <taxon>Actinomycetes</taxon>
        <taxon>Mycobacteriales</taxon>
        <taxon>Mycobacteriaceae</taxon>
        <taxon>Mycobacterium</taxon>
        <taxon>Mycobacterium tuberculosis complex</taxon>
    </lineage>
</organism>
<proteinExistence type="evidence at protein level"/>
<reference key="1">
    <citation type="journal article" date="1998" name="Nature">
        <title>Deciphering the biology of Mycobacterium tuberculosis from the complete genome sequence.</title>
        <authorList>
            <person name="Cole S.T."/>
            <person name="Brosch R."/>
            <person name="Parkhill J."/>
            <person name="Garnier T."/>
            <person name="Churcher C.M."/>
            <person name="Harris D.E."/>
            <person name="Gordon S.V."/>
            <person name="Eiglmeier K."/>
            <person name="Gas S."/>
            <person name="Barry C.E. III"/>
            <person name="Tekaia F."/>
            <person name="Badcock K."/>
            <person name="Basham D."/>
            <person name="Brown D."/>
            <person name="Chillingworth T."/>
            <person name="Connor R."/>
            <person name="Davies R.M."/>
            <person name="Devlin K."/>
            <person name="Feltwell T."/>
            <person name="Gentles S."/>
            <person name="Hamlin N."/>
            <person name="Holroyd S."/>
            <person name="Hornsby T."/>
            <person name="Jagels K."/>
            <person name="Krogh A."/>
            <person name="McLean J."/>
            <person name="Moule S."/>
            <person name="Murphy L.D."/>
            <person name="Oliver S."/>
            <person name="Osborne J."/>
            <person name="Quail M.A."/>
            <person name="Rajandream M.A."/>
            <person name="Rogers J."/>
            <person name="Rutter S."/>
            <person name="Seeger K."/>
            <person name="Skelton S."/>
            <person name="Squares S."/>
            <person name="Squares R."/>
            <person name="Sulston J.E."/>
            <person name="Taylor K."/>
            <person name="Whitehead S."/>
            <person name="Barrell B.G."/>
        </authorList>
    </citation>
    <scope>NUCLEOTIDE SEQUENCE [LARGE SCALE GENOMIC DNA]</scope>
    <source>
        <strain>ATCC 25618 / H37Rv</strain>
    </source>
</reference>
<reference key="2">
    <citation type="journal article" date="2010" name="J. Antimicrob. Chemother.">
        <title>PhoY2 but not PhoY1 is the PhoU homologue involved in persisters in Mycobacterium tuberculosis.</title>
        <authorList>
            <person name="Shi W."/>
            <person name="Zhang Y."/>
        </authorList>
    </citation>
    <scope>FUNCTION IN TOLERANCE TO ANTIBIOTICS</scope>
    <scope>DISRUPTION PHENOTYPE</scope>
    <scope>POTENTIAL DRUG TARGET</scope>
    <source>
        <strain>ATCC 25618 / H37Rv</strain>
    </source>
</reference>
<reference key="3">
    <citation type="journal article" date="2011" name="Mol. Cell. Proteomics">
        <title>Proteogenomic analysis of Mycobacterium tuberculosis by high resolution mass spectrometry.</title>
        <authorList>
            <person name="Kelkar D.S."/>
            <person name="Kumar D."/>
            <person name="Kumar P."/>
            <person name="Balakrishnan L."/>
            <person name="Muthusamy B."/>
            <person name="Yadav A.K."/>
            <person name="Shrivastava P."/>
            <person name="Marimuthu A."/>
            <person name="Anand S."/>
            <person name="Sundaram H."/>
            <person name="Kingsbury R."/>
            <person name="Harsha H.C."/>
            <person name="Nair B."/>
            <person name="Prasad T.S."/>
            <person name="Chauhan D.S."/>
            <person name="Katoch K."/>
            <person name="Katoch V.M."/>
            <person name="Kumar P."/>
            <person name="Chaerkady R."/>
            <person name="Ramachandran S."/>
            <person name="Dash D."/>
            <person name="Pandey A."/>
        </authorList>
    </citation>
    <scope>IDENTIFICATION BY MASS SPECTROMETRY [LARGE SCALE ANALYSIS]</scope>
    <source>
        <strain>ATCC 25618 / H37Rv</strain>
    </source>
</reference>
<dbReference type="EMBL" id="AL123456">
    <property type="protein sequence ID" value="CCP43569.1"/>
    <property type="molecule type" value="Genomic_DNA"/>
</dbReference>
<dbReference type="PIR" id="E70810">
    <property type="entry name" value="E70810"/>
</dbReference>
<dbReference type="RefSeq" id="NP_215336.1">
    <property type="nucleotide sequence ID" value="NC_000962.3"/>
</dbReference>
<dbReference type="SMR" id="P9WI95"/>
<dbReference type="FunCoup" id="P9WI95">
    <property type="interactions" value="8"/>
</dbReference>
<dbReference type="STRING" id="83332.Rv0821c"/>
<dbReference type="PaxDb" id="83332-Rv0821c"/>
<dbReference type="DNASU" id="885270"/>
<dbReference type="GeneID" id="885270"/>
<dbReference type="KEGG" id="mtu:Rv0821c"/>
<dbReference type="KEGG" id="mtv:RVBD_0821c"/>
<dbReference type="TubercuList" id="Rv0821c"/>
<dbReference type="eggNOG" id="COG0704">
    <property type="taxonomic scope" value="Bacteria"/>
</dbReference>
<dbReference type="InParanoid" id="P9WI95"/>
<dbReference type="OrthoDB" id="9814256at2"/>
<dbReference type="PhylomeDB" id="P9WI95"/>
<dbReference type="Proteomes" id="UP000001584">
    <property type="component" value="Chromosome"/>
</dbReference>
<dbReference type="GO" id="GO:0005737">
    <property type="term" value="C:cytoplasm"/>
    <property type="evidence" value="ECO:0000250"/>
    <property type="project" value="UniProtKB"/>
</dbReference>
<dbReference type="GO" id="GO:0042803">
    <property type="term" value="F:protein homodimerization activity"/>
    <property type="evidence" value="ECO:0000250"/>
    <property type="project" value="UniProtKB"/>
</dbReference>
<dbReference type="GO" id="GO:0022611">
    <property type="term" value="P:dormancy process"/>
    <property type="evidence" value="ECO:0000314"/>
    <property type="project" value="MTBBASE"/>
</dbReference>
<dbReference type="GO" id="GO:0030643">
    <property type="term" value="P:intracellular phosphate ion homeostasis"/>
    <property type="evidence" value="ECO:0007669"/>
    <property type="project" value="InterPro"/>
</dbReference>
<dbReference type="GO" id="GO:0045936">
    <property type="term" value="P:negative regulation of phosphate metabolic process"/>
    <property type="evidence" value="ECO:0000250"/>
    <property type="project" value="UniProtKB"/>
</dbReference>
<dbReference type="GO" id="GO:2000186">
    <property type="term" value="P:negative regulation of phosphate transmembrane transport"/>
    <property type="evidence" value="ECO:0000250"/>
    <property type="project" value="UniProtKB"/>
</dbReference>
<dbReference type="GO" id="GO:0006817">
    <property type="term" value="P:phosphate ion transport"/>
    <property type="evidence" value="ECO:0007669"/>
    <property type="project" value="UniProtKB-KW"/>
</dbReference>
<dbReference type="GO" id="GO:0046677">
    <property type="term" value="P:response to antibiotic"/>
    <property type="evidence" value="ECO:0000315"/>
    <property type="project" value="UniProtKB"/>
</dbReference>
<dbReference type="FunFam" id="1.20.58.220:FF:000004">
    <property type="entry name" value="Phosphate-specific transport system accessory protein PhoU"/>
    <property type="match status" value="1"/>
</dbReference>
<dbReference type="Gene3D" id="1.20.58.220">
    <property type="entry name" value="Phosphate transport system protein phou homolog 2, domain 2"/>
    <property type="match status" value="1"/>
</dbReference>
<dbReference type="InterPro" id="IPR028366">
    <property type="entry name" value="P_transport_PhoU"/>
</dbReference>
<dbReference type="InterPro" id="IPR038078">
    <property type="entry name" value="PhoU-like_sf"/>
</dbReference>
<dbReference type="InterPro" id="IPR026022">
    <property type="entry name" value="PhoU_dom"/>
</dbReference>
<dbReference type="NCBIfam" id="TIGR02135">
    <property type="entry name" value="phoU_full"/>
    <property type="match status" value="1"/>
</dbReference>
<dbReference type="PANTHER" id="PTHR42930">
    <property type="entry name" value="PHOSPHATE-SPECIFIC TRANSPORT SYSTEM ACCESSORY PROTEIN PHOU"/>
    <property type="match status" value="1"/>
</dbReference>
<dbReference type="PANTHER" id="PTHR42930:SF3">
    <property type="entry name" value="PHOSPHATE-SPECIFIC TRANSPORT SYSTEM ACCESSORY PROTEIN PHOU"/>
    <property type="match status" value="1"/>
</dbReference>
<dbReference type="Pfam" id="PF01895">
    <property type="entry name" value="PhoU"/>
    <property type="match status" value="2"/>
</dbReference>
<dbReference type="PIRSF" id="PIRSF003107">
    <property type="entry name" value="PhoU"/>
    <property type="match status" value="1"/>
</dbReference>
<dbReference type="SUPFAM" id="SSF109755">
    <property type="entry name" value="PhoU-like"/>
    <property type="match status" value="1"/>
</dbReference>
<evidence type="ECO:0000250" key="1"/>
<evidence type="ECO:0000269" key="2">
    <source>
    </source>
</evidence>
<evidence type="ECO:0000305" key="3"/>
<name>PHOU2_MYCTU</name>
<gene>
    <name type="primary">phoU2</name>
    <name type="synonym">phoY2</name>
    <name type="ordered locus">Rv0821c</name>
    <name type="ORF">MTV043.13c</name>
</gene>
<protein>
    <recommendedName>
        <fullName>Phosphate-specific transport system accessory protein PhoU homolog 2</fullName>
        <shortName>Pst system accessory protein PhoU homolog 2</shortName>
    </recommendedName>
</protein>
<sequence>MRTAYHEQLSELSERLGEMCGLAGIAMERATQALLQADLVLAEQVISDHEKIATLSARAEESAFVLLALQAPVAGDLRAIVSAIQMVADIDRMGALALHVAKIARRRHPQHALPEEVNGYFAEMGRVAVELGNSAQEVVLSHDPEKAAQIREEDDAMDDLHRHLFTVLMDREWKHGVAAAVDVTLLSRFYERFADHAVEVARRVIFQATGAFP</sequence>
<keyword id="KW-0963">Cytoplasm</keyword>
<keyword id="KW-0582">Pharmaceutical</keyword>
<keyword id="KW-0592">Phosphate transport</keyword>
<keyword id="KW-1185">Reference proteome</keyword>
<keyword id="KW-0813">Transport</keyword>